<feature type="chain" id="PRO_0000454870" description="L-lactate oxidase">
    <location>
        <begin position="1"/>
        <end position="408"/>
    </location>
</feature>
<feature type="domain" description="FMN hydroxy acid dehydrogenase" evidence="3">
    <location>
        <begin position="14"/>
        <end position="370"/>
    </location>
</feature>
<feature type="active site" description="Proton acceptor" evidence="2">
    <location>
        <position position="265"/>
    </location>
</feature>
<feature type="binding site" evidence="2">
    <location>
        <position position="40"/>
    </location>
    <ligand>
        <name>pyruvate</name>
        <dbReference type="ChEBI" id="CHEBI:15361"/>
    </ligand>
</feature>
<feature type="binding site" evidence="2">
    <location>
        <begin position="93"/>
        <end position="95"/>
    </location>
    <ligand>
        <name>FMN</name>
        <dbReference type="ChEBI" id="CHEBI:58210"/>
    </ligand>
</feature>
<feature type="binding site" evidence="2">
    <location>
        <position position="122"/>
    </location>
    <ligand>
        <name>FMN</name>
        <dbReference type="ChEBI" id="CHEBI:58210"/>
    </ligand>
</feature>
<feature type="binding site" evidence="2">
    <location>
        <position position="144"/>
    </location>
    <ligand>
        <name>FMN</name>
        <dbReference type="ChEBI" id="CHEBI:58210"/>
    </ligand>
</feature>
<feature type="binding site" evidence="2">
    <location>
        <position position="146"/>
    </location>
    <ligand>
        <name>pyruvate</name>
        <dbReference type="ChEBI" id="CHEBI:15361"/>
    </ligand>
</feature>
<feature type="binding site" evidence="2">
    <location>
        <position position="172"/>
    </location>
    <ligand>
        <name>FMN</name>
        <dbReference type="ChEBI" id="CHEBI:58210"/>
    </ligand>
</feature>
<feature type="binding site" evidence="2">
    <location>
        <position position="181"/>
    </location>
    <ligand>
        <name>pyruvate</name>
        <dbReference type="ChEBI" id="CHEBI:15361"/>
    </ligand>
</feature>
<feature type="binding site" evidence="2">
    <location>
        <position position="241"/>
    </location>
    <ligand>
        <name>FMN</name>
        <dbReference type="ChEBI" id="CHEBI:58210"/>
    </ligand>
</feature>
<feature type="binding site" evidence="2">
    <location>
        <position position="263"/>
    </location>
    <ligand>
        <name>FMN</name>
        <dbReference type="ChEBI" id="CHEBI:58210"/>
    </ligand>
</feature>
<feature type="binding site" evidence="2">
    <location>
        <position position="265"/>
    </location>
    <ligand>
        <name>pyruvate</name>
        <dbReference type="ChEBI" id="CHEBI:15361"/>
    </ligand>
</feature>
<feature type="binding site" evidence="2">
    <location>
        <position position="268"/>
    </location>
    <ligand>
        <name>pyruvate</name>
        <dbReference type="ChEBI" id="CHEBI:15361"/>
    </ligand>
</feature>
<feature type="binding site" evidence="2">
    <location>
        <begin position="296"/>
        <end position="300"/>
    </location>
    <ligand>
        <name>FMN</name>
        <dbReference type="ChEBI" id="CHEBI:58210"/>
    </ligand>
</feature>
<feature type="binding site" evidence="2">
    <location>
        <position position="320"/>
    </location>
    <ligand>
        <name>FMN</name>
        <dbReference type="ChEBI" id="CHEBI:58210"/>
    </ligand>
</feature>
<evidence type="ECO:0000250" key="1">
    <source>
        <dbReference type="UniProtKB" id="O33655"/>
    </source>
</evidence>
<evidence type="ECO:0000250" key="2">
    <source>
        <dbReference type="UniProtKB" id="Q44467"/>
    </source>
</evidence>
<evidence type="ECO:0000255" key="3">
    <source>
        <dbReference type="PROSITE-ProRule" id="PRU00683"/>
    </source>
</evidence>
<evidence type="ECO:0000269" key="4">
    <source>
    </source>
</evidence>
<evidence type="ECO:0000305" key="5"/>
<evidence type="ECO:0000305" key="6">
    <source>
    </source>
</evidence>
<evidence type="ECO:0000312" key="7">
    <source>
        <dbReference type="EMBL" id="KAA9320359.1"/>
    </source>
</evidence>
<sequence length="408" mass="44229">MTVYYKGFPQSDRNEAIKMVNVDELEDRVRKVMPEAAYYYIASGSENEWTWRNNTAAFNHFQIVPRSLTNMDNPSTETQFMGMDLKTPIMICPIACHGIAHKDAEVATAQGAKAAGALFSSSTYANRSVEDIATATGDSPKFFQLYLSKDWDFNKMVFDAVKSAGYKGIMLTVDALVSGYREANLRTNFTFPVPLDFFTRYVGAEGEGMSVAQMYANSAQKIGPADVAKIKEMSGLPVFVKGVMNAEDAYMAIGAGADGIVVSNHGGREIDTAPATIDMLPEIAAAVNGRVPIILDSGVRRGSHVFKALALGADLVGIGRPFLYGLALGGAKGVESVINQINNEFKILMQLTGCKTVEDVKHADIRQINYTADNLPSNTDPSVRRAYPVTKENQMEGTQDAATGASKH</sequence>
<proteinExistence type="evidence at protein level"/>
<comment type="function">
    <text evidence="1 4">Oxidase that catalyzes the oxidation of a broad range of 2-hydroxyacids in vitro, such as (S)-lactate, 2-hydroxyoctanoate, and to a lesser extent glycolate, mandelate and 2-hydroxyoctadecanoate, to the corresponding 2-oxoacids, with a reduction of O2 to H2O2 (PubMed:34555022). May be involved in the utilization of L-lactate as an energy source for growth (By similarity).</text>
</comment>
<comment type="catalytic activity">
    <reaction evidence="4">
        <text>a (2S)-2-hydroxycarboxylate + O2 = a 2-oxocarboxylate + H2O2</text>
        <dbReference type="Rhea" id="RHEA:16789"/>
        <dbReference type="ChEBI" id="CHEBI:15379"/>
        <dbReference type="ChEBI" id="CHEBI:16240"/>
        <dbReference type="ChEBI" id="CHEBI:35179"/>
        <dbReference type="ChEBI" id="CHEBI:58123"/>
        <dbReference type="EC" id="1.1.3.15"/>
    </reaction>
</comment>
<comment type="catalytic activity">
    <reaction evidence="4">
        <text>(S)-lactate + O2 = pyruvate + H2O2</text>
        <dbReference type="Rhea" id="RHEA:55868"/>
        <dbReference type="ChEBI" id="CHEBI:15361"/>
        <dbReference type="ChEBI" id="CHEBI:15379"/>
        <dbReference type="ChEBI" id="CHEBI:16240"/>
        <dbReference type="ChEBI" id="CHEBI:16651"/>
    </reaction>
    <physiologicalReaction direction="left-to-right" evidence="5">
        <dbReference type="Rhea" id="RHEA:55869"/>
    </physiologicalReaction>
</comment>
<comment type="catalytic activity">
    <reaction evidence="4">
        <text>2-hydroxyoctanoate + O2 = 2-oxooctanoate + H2O2</text>
        <dbReference type="Rhea" id="RHEA:67940"/>
        <dbReference type="ChEBI" id="CHEBI:15379"/>
        <dbReference type="ChEBI" id="CHEBI:16240"/>
        <dbReference type="ChEBI" id="CHEBI:133514"/>
        <dbReference type="ChEBI" id="CHEBI:176689"/>
    </reaction>
</comment>
<comment type="catalytic activity">
    <reaction evidence="4">
        <text>glycolate + O2 = glyoxylate + H2O2</text>
        <dbReference type="Rhea" id="RHEA:25311"/>
        <dbReference type="ChEBI" id="CHEBI:15379"/>
        <dbReference type="ChEBI" id="CHEBI:16240"/>
        <dbReference type="ChEBI" id="CHEBI:29805"/>
        <dbReference type="ChEBI" id="CHEBI:36655"/>
        <dbReference type="EC" id="1.1.3.15"/>
    </reaction>
</comment>
<comment type="catalytic activity">
    <reaction evidence="4">
        <text>mandelate + O2 = phenylglyoxylate + H2O2</text>
        <dbReference type="Rhea" id="RHEA:68968"/>
        <dbReference type="ChEBI" id="CHEBI:15379"/>
        <dbReference type="ChEBI" id="CHEBI:16240"/>
        <dbReference type="ChEBI" id="CHEBI:25147"/>
        <dbReference type="ChEBI" id="CHEBI:36656"/>
    </reaction>
</comment>
<comment type="catalytic activity">
    <reaction evidence="4">
        <text>2-hydroxyoctadecanoate + O2 = 2-oxooctadecanoate + H2O2</text>
        <dbReference type="Rhea" id="RHEA:68964"/>
        <dbReference type="ChEBI" id="CHEBI:15379"/>
        <dbReference type="ChEBI" id="CHEBI:16240"/>
        <dbReference type="ChEBI" id="CHEBI:17162"/>
        <dbReference type="ChEBI" id="CHEBI:76724"/>
    </reaction>
</comment>
<comment type="cofactor">
    <cofactor evidence="2">
        <name>FMN</name>
        <dbReference type="ChEBI" id="CHEBI:58210"/>
    </cofactor>
    <text evidence="2">Binds 1 FMN per subunit.</text>
</comment>
<comment type="subunit">
    <text evidence="2">Homotetramer.</text>
</comment>
<comment type="similarity">
    <text evidence="5">Belongs to the FMN-dependent alpha-hydroxy acid dehydrogenase family.</text>
</comment>
<protein>
    <recommendedName>
        <fullName evidence="5">L-lactate oxidase</fullName>
        <shortName evidence="5">LOX</shortName>
        <ecNumber evidence="4">1.1.3.-</ecNumber>
    </recommendedName>
    <alternativeName>
        <fullName evidence="6">(S)-2-hydroxy-acid oxidase</fullName>
        <ecNumber evidence="4">1.1.3.15</ecNumber>
    </alternativeName>
</protein>
<dbReference type="EC" id="1.1.3.-" evidence="4"/>
<dbReference type="EC" id="1.1.3.15" evidence="4"/>
<dbReference type="EMBL" id="VYWW01000049">
    <property type="protein sequence ID" value="KAA9320359.1"/>
    <property type="molecule type" value="Genomic_DNA"/>
</dbReference>
<dbReference type="RefSeq" id="WP_006588101.1">
    <property type="nucleotide sequence ID" value="NZ_WKKD01000003.1"/>
</dbReference>
<dbReference type="SMR" id="A0A5N1I561"/>
<dbReference type="KEGG" id="lje:BUE77_00875"/>
<dbReference type="OrthoDB" id="9770452at2"/>
<dbReference type="Proteomes" id="UP000327236">
    <property type="component" value="Unassembled WGS sequence"/>
</dbReference>
<dbReference type="GO" id="GO:0010181">
    <property type="term" value="F:FMN binding"/>
    <property type="evidence" value="ECO:0007669"/>
    <property type="project" value="InterPro"/>
</dbReference>
<dbReference type="GO" id="GO:0016491">
    <property type="term" value="F:oxidoreductase activity"/>
    <property type="evidence" value="ECO:0007669"/>
    <property type="project" value="UniProtKB-KW"/>
</dbReference>
<dbReference type="CDD" id="cd04737">
    <property type="entry name" value="LOX_like_FMN"/>
    <property type="match status" value="1"/>
</dbReference>
<dbReference type="FunFam" id="3.20.20.70:FF:000029">
    <property type="entry name" value="L-lactate dehydrogenase"/>
    <property type="match status" value="1"/>
</dbReference>
<dbReference type="Gene3D" id="3.20.20.70">
    <property type="entry name" value="Aldolase class I"/>
    <property type="match status" value="1"/>
</dbReference>
<dbReference type="InterPro" id="IPR013785">
    <property type="entry name" value="Aldolase_TIM"/>
</dbReference>
<dbReference type="InterPro" id="IPR012133">
    <property type="entry name" value="Alpha-hydoxy_acid_DH_FMN"/>
</dbReference>
<dbReference type="InterPro" id="IPR000262">
    <property type="entry name" value="FMN-dep_DH"/>
</dbReference>
<dbReference type="InterPro" id="IPR037396">
    <property type="entry name" value="FMN_HAD"/>
</dbReference>
<dbReference type="PANTHER" id="PTHR10578:SF107">
    <property type="entry name" value="2-HYDROXYACID OXIDASE 1"/>
    <property type="match status" value="1"/>
</dbReference>
<dbReference type="PANTHER" id="PTHR10578">
    <property type="entry name" value="S -2-HYDROXY-ACID OXIDASE-RELATED"/>
    <property type="match status" value="1"/>
</dbReference>
<dbReference type="Pfam" id="PF01070">
    <property type="entry name" value="FMN_dh"/>
    <property type="match status" value="1"/>
</dbReference>
<dbReference type="PIRSF" id="PIRSF000138">
    <property type="entry name" value="Al-hdrx_acd_dh"/>
    <property type="match status" value="1"/>
</dbReference>
<dbReference type="SUPFAM" id="SSF51395">
    <property type="entry name" value="FMN-linked oxidoreductases"/>
    <property type="match status" value="1"/>
</dbReference>
<dbReference type="PROSITE" id="PS51349">
    <property type="entry name" value="FMN_HYDROXY_ACID_DH_2"/>
    <property type="match status" value="1"/>
</dbReference>
<name>LOX_LACJE</name>
<organism>
    <name type="scientific">Lactobacillus jensenii</name>
    <dbReference type="NCBI Taxonomy" id="109790"/>
    <lineage>
        <taxon>Bacteria</taxon>
        <taxon>Bacillati</taxon>
        <taxon>Bacillota</taxon>
        <taxon>Bacilli</taxon>
        <taxon>Lactobacillales</taxon>
        <taxon>Lactobacillaceae</taxon>
        <taxon>Lactobacillus</taxon>
    </lineage>
</organism>
<reference key="1">
    <citation type="submission" date="2019-09" db="EMBL/GenBank/DDBJ databases">
        <title>Draft genome sequence assemblies of isolates from the urinary tract.</title>
        <authorList>
            <person name="Mores C.R."/>
            <person name="Putonti C."/>
            <person name="Wolfe A.J."/>
        </authorList>
    </citation>
    <scope>NUCLEOTIDE SEQUENCE [LARGE SCALE GENOMIC DNA]</scope>
    <source>
        <strain>UMB246</strain>
    </source>
</reference>
<reference key="2">
    <citation type="journal article" date="2021" name="PLoS Comput. Biol.">
        <title>Experimental and computational investigation of enzyme functional annotations uncovers misannotation in the EC 1.1.3.15 enzyme class.</title>
        <authorList>
            <person name="Rembeza E."/>
            <person name="Engqvist M.K.M."/>
        </authorList>
    </citation>
    <scope>FUNCTION</scope>
    <scope>CATALYTIC ACTIVITY</scope>
</reference>
<keyword id="KW-0285">Flavoprotein</keyword>
<keyword id="KW-0288">FMN</keyword>
<keyword id="KW-0560">Oxidoreductase</keyword>
<accession>A0A5N1I561</accession>
<gene>
    <name evidence="7" type="ORF">F6H94_08130</name>
</gene>